<gene>
    <name type="ORF">TRIADDRAFT_21706</name>
</gene>
<organism>
    <name type="scientific">Trichoplax adhaerens</name>
    <name type="common">Trichoplax reptans</name>
    <dbReference type="NCBI Taxonomy" id="10228"/>
    <lineage>
        <taxon>Eukaryota</taxon>
        <taxon>Metazoa</taxon>
        <taxon>Placozoa</taxon>
        <taxon>Uniplacotomia</taxon>
        <taxon>Trichoplacea</taxon>
        <taxon>Trichoplacidae</taxon>
        <taxon>Trichoplax</taxon>
    </lineage>
</organism>
<feature type="chain" id="PRO_0000392033" description="CDGSH iron-sulfur domain-containing protein 2 homolog">
    <location>
        <begin position="1"/>
        <end position="140"/>
    </location>
</feature>
<feature type="topological domain" description="Lumenal" evidence="2">
    <location>
        <begin position="1"/>
        <end position="35"/>
    </location>
</feature>
<feature type="transmembrane region" description="Helical" evidence="2">
    <location>
        <begin position="36"/>
        <end position="59"/>
    </location>
</feature>
<feature type="topological domain" description="Cytoplasmic" evidence="2">
    <location>
        <begin position="60"/>
        <end position="140"/>
    </location>
</feature>
<feature type="binding site" evidence="1">
    <location>
        <position position="104"/>
    </location>
    <ligand>
        <name>[2Fe-2S] cluster</name>
        <dbReference type="ChEBI" id="CHEBI:190135"/>
    </ligand>
</feature>
<feature type="binding site" evidence="1">
    <location>
        <position position="106"/>
    </location>
    <ligand>
        <name>[2Fe-2S] cluster</name>
        <dbReference type="ChEBI" id="CHEBI:190135"/>
    </ligand>
</feature>
<feature type="binding site" evidence="1">
    <location>
        <position position="115"/>
    </location>
    <ligand>
        <name>[2Fe-2S] cluster</name>
        <dbReference type="ChEBI" id="CHEBI:190135"/>
    </ligand>
</feature>
<feature type="binding site" evidence="1">
    <location>
        <position position="119"/>
    </location>
    <ligand>
        <name>[2Fe-2S] cluster</name>
        <dbReference type="ChEBI" id="CHEBI:190135"/>
    </ligand>
</feature>
<accession>B3RML8</accession>
<protein>
    <recommendedName>
        <fullName>CDGSH iron-sulfur domain-containing protein 2 homolog</fullName>
    </recommendedName>
</protein>
<reference key="1">
    <citation type="journal article" date="2008" name="Nature">
        <title>The Trichoplax genome and the nature of placozoans.</title>
        <authorList>
            <person name="Srivastava M."/>
            <person name="Begovic E."/>
            <person name="Chapman J."/>
            <person name="Putnam N.H."/>
            <person name="Hellsten U."/>
            <person name="Kawashima T."/>
            <person name="Kuo A."/>
            <person name="Mitros T."/>
            <person name="Salamov A."/>
            <person name="Carpenter M.L."/>
            <person name="Signorovitch A.Y."/>
            <person name="Moreno M.A."/>
            <person name="Kamm K."/>
            <person name="Grimwood J."/>
            <person name="Schmutz J."/>
            <person name="Shapiro H."/>
            <person name="Grigoriev I.V."/>
            <person name="Buss L.W."/>
            <person name="Schierwater B."/>
            <person name="Dellaporta S.L."/>
            <person name="Rokhsar D.S."/>
        </authorList>
    </citation>
    <scope>NUCLEOTIDE SEQUENCE [LARGE SCALE GENOMIC DNA]</scope>
    <source>
        <strain>Grell-BS-1999</strain>
    </source>
</reference>
<name>CISD2_TRIAD</name>
<keyword id="KW-0001">2Fe-2S</keyword>
<keyword id="KW-0256">Endoplasmic reticulum</keyword>
<keyword id="KW-0408">Iron</keyword>
<keyword id="KW-0411">Iron-sulfur</keyword>
<keyword id="KW-0472">Membrane</keyword>
<keyword id="KW-0479">Metal-binding</keyword>
<keyword id="KW-1185">Reference proteome</keyword>
<keyword id="KW-0812">Transmembrane</keyword>
<keyword id="KW-1133">Transmembrane helix</keyword>
<evidence type="ECO:0000250" key="1"/>
<evidence type="ECO:0000255" key="2"/>
<evidence type="ECO:0000305" key="3"/>
<dbReference type="EMBL" id="DS985242">
    <property type="protein sequence ID" value="EDV27872.1"/>
    <property type="molecule type" value="Genomic_DNA"/>
</dbReference>
<dbReference type="RefSeq" id="XP_002109706.1">
    <property type="nucleotide sequence ID" value="XM_002109670.1"/>
</dbReference>
<dbReference type="SMR" id="B3RML8"/>
<dbReference type="FunCoup" id="B3RML8">
    <property type="interactions" value="1978"/>
</dbReference>
<dbReference type="EnsemblMetazoa" id="TriadT21706">
    <property type="protein sequence ID" value="TriadP21706"/>
    <property type="gene ID" value="TriadG21706"/>
</dbReference>
<dbReference type="GeneID" id="6750921"/>
<dbReference type="KEGG" id="tad:TRIADDRAFT_21706"/>
<dbReference type="CTD" id="6750921"/>
<dbReference type="eggNOG" id="KOG3461">
    <property type="taxonomic scope" value="Eukaryota"/>
</dbReference>
<dbReference type="HOGENOM" id="CLU_132293_1_0_1"/>
<dbReference type="InParanoid" id="B3RML8"/>
<dbReference type="OMA" id="AMIHTIC"/>
<dbReference type="OrthoDB" id="449252at2759"/>
<dbReference type="PhylomeDB" id="B3RML8"/>
<dbReference type="Proteomes" id="UP000009022">
    <property type="component" value="Unassembled WGS sequence"/>
</dbReference>
<dbReference type="GO" id="GO:0005789">
    <property type="term" value="C:endoplasmic reticulum membrane"/>
    <property type="evidence" value="ECO:0007669"/>
    <property type="project" value="UniProtKB-SubCell"/>
</dbReference>
<dbReference type="GO" id="GO:0005741">
    <property type="term" value="C:mitochondrial outer membrane"/>
    <property type="evidence" value="ECO:0000318"/>
    <property type="project" value="GO_Central"/>
</dbReference>
<dbReference type="GO" id="GO:0051537">
    <property type="term" value="F:2 iron, 2 sulfur cluster binding"/>
    <property type="evidence" value="ECO:0000318"/>
    <property type="project" value="GO_Central"/>
</dbReference>
<dbReference type="GO" id="GO:0047801">
    <property type="term" value="F:L-cysteine transaminase activity"/>
    <property type="evidence" value="ECO:0000318"/>
    <property type="project" value="GO_Central"/>
</dbReference>
<dbReference type="GO" id="GO:0046872">
    <property type="term" value="F:metal ion binding"/>
    <property type="evidence" value="ECO:0007669"/>
    <property type="project" value="UniProtKB-KW"/>
</dbReference>
<dbReference type="GO" id="GO:0006879">
    <property type="term" value="P:intracellular iron ion homeostasis"/>
    <property type="evidence" value="ECO:0000318"/>
    <property type="project" value="GO_Central"/>
</dbReference>
<dbReference type="GO" id="GO:0010506">
    <property type="term" value="P:regulation of autophagy"/>
    <property type="evidence" value="ECO:0007669"/>
    <property type="project" value="InterPro"/>
</dbReference>
<dbReference type="FunFam" id="3.40.5.90:FF:000001">
    <property type="entry name" value="CDGSH iron-sulfur domain-containing protein 1"/>
    <property type="match status" value="1"/>
</dbReference>
<dbReference type="Gene3D" id="3.40.5.90">
    <property type="entry name" value="CDGSH iron-sulfur domain, mitoNEET-type"/>
    <property type="match status" value="1"/>
</dbReference>
<dbReference type="InterPro" id="IPR045131">
    <property type="entry name" value="CISD1/2"/>
</dbReference>
<dbReference type="InterPro" id="IPR018967">
    <property type="entry name" value="FeS-contain_CDGSH-typ"/>
</dbReference>
<dbReference type="InterPro" id="IPR019610">
    <property type="entry name" value="FeS-contain_mitoNEET_N"/>
</dbReference>
<dbReference type="InterPro" id="IPR042216">
    <property type="entry name" value="MitoNEET_CISD"/>
</dbReference>
<dbReference type="PANTHER" id="PTHR13680">
    <property type="entry name" value="CDGSH IRON-SULFUR DOMAIN-CONTAINING PROTEIN 1"/>
    <property type="match status" value="1"/>
</dbReference>
<dbReference type="PANTHER" id="PTHR13680:SF5">
    <property type="entry name" value="CDGSH IRON-SULFUR DOMAIN-CONTAINING PROTEIN 1"/>
    <property type="match status" value="1"/>
</dbReference>
<dbReference type="Pfam" id="PF10660">
    <property type="entry name" value="MitoNEET_N"/>
    <property type="match status" value="1"/>
</dbReference>
<dbReference type="Pfam" id="PF09360">
    <property type="entry name" value="zf-CDGSH"/>
    <property type="match status" value="1"/>
</dbReference>
<dbReference type="SMART" id="SM00704">
    <property type="entry name" value="ZnF_CDGSH"/>
    <property type="match status" value="1"/>
</dbReference>
<proteinExistence type="inferred from homology"/>
<sequence>MEAIAKLIKVQLPNYLQKLPVPSSLSGFAELSPSDAIAVVFPFAVVSWLIGYSTYKFFQPKAVELPPSPKAKDTNCVNKCIDKTCKKVVHTVDIEDVGEKLVFCRCWRSKKFPYCDGSHNNHNEQEQDNVGPLIVKGKAN</sequence>
<comment type="cofactor">
    <cofactor evidence="1">
        <name>[2Fe-2S] cluster</name>
        <dbReference type="ChEBI" id="CHEBI:190135"/>
    </cofactor>
    <text evidence="1">Binds 1 [2Fe-2S] cluster.</text>
</comment>
<comment type="subcellular location">
    <subcellularLocation>
        <location evidence="3">Endoplasmic reticulum membrane</location>
        <topology evidence="3">Single-pass membrane protein</topology>
    </subcellularLocation>
</comment>
<comment type="similarity">
    <text evidence="3">Belongs to the CISD protein family. CISD2 subfamily.</text>
</comment>